<comment type="function">
    <text evidence="1">One of two assembly initiator proteins, it binds directly to the 5'-end of the 23S rRNA, where it nucleates assembly of the 50S subunit.</text>
</comment>
<comment type="function">
    <text evidence="1">One of the proteins that surrounds the polypeptide exit tunnel on the outside of the subunit.</text>
</comment>
<comment type="subunit">
    <text evidence="1">Part of the 50S ribosomal subunit.</text>
</comment>
<comment type="similarity">
    <text evidence="1">Belongs to the universal ribosomal protein uL24 family.</text>
</comment>
<comment type="sequence caution" evidence="2">
    <conflict type="erroneous initiation">
        <sequence resource="EMBL-CDS" id="ABX07555"/>
    </conflict>
</comment>
<keyword id="KW-0687">Ribonucleoprotein</keyword>
<keyword id="KW-0689">Ribosomal protein</keyword>
<keyword id="KW-0694">RNA-binding</keyword>
<keyword id="KW-0699">rRNA-binding</keyword>
<feature type="chain" id="PRO_0000355686" description="Large ribosomal subunit protein uL24">
    <location>
        <begin position="1"/>
        <end position="102"/>
    </location>
</feature>
<proteinExistence type="inferred from homology"/>
<evidence type="ECO:0000255" key="1">
    <source>
        <dbReference type="HAMAP-Rule" id="MF_01326"/>
    </source>
</evidence>
<evidence type="ECO:0000305" key="2"/>
<protein>
    <recommendedName>
        <fullName evidence="1">Large ribosomal subunit protein uL24</fullName>
    </recommendedName>
    <alternativeName>
        <fullName evidence="2">50S ribosomal protein L24</fullName>
    </alternativeName>
</protein>
<accession>A9B422</accession>
<reference key="1">
    <citation type="journal article" date="2011" name="Stand. Genomic Sci.">
        <title>Complete genome sequence of the filamentous gliding predatory bacterium Herpetosiphon aurantiacus type strain (114-95(T)).</title>
        <authorList>
            <person name="Kiss H."/>
            <person name="Nett M."/>
            <person name="Domin N."/>
            <person name="Martin K."/>
            <person name="Maresca J.A."/>
            <person name="Copeland A."/>
            <person name="Lapidus A."/>
            <person name="Lucas S."/>
            <person name="Berry K.W."/>
            <person name="Glavina Del Rio T."/>
            <person name="Dalin E."/>
            <person name="Tice H."/>
            <person name="Pitluck S."/>
            <person name="Richardson P."/>
            <person name="Bruce D."/>
            <person name="Goodwin L."/>
            <person name="Han C."/>
            <person name="Detter J.C."/>
            <person name="Schmutz J."/>
            <person name="Brettin T."/>
            <person name="Land M."/>
            <person name="Hauser L."/>
            <person name="Kyrpides N.C."/>
            <person name="Ivanova N."/>
            <person name="Goeker M."/>
            <person name="Woyke T."/>
            <person name="Klenk H.P."/>
            <person name="Bryant D.A."/>
        </authorList>
    </citation>
    <scope>NUCLEOTIDE SEQUENCE [LARGE SCALE GENOMIC DNA]</scope>
    <source>
        <strain>ATCC 23779 / DSM 785 / 114-95</strain>
    </source>
</reference>
<dbReference type="EMBL" id="CP000875">
    <property type="protein sequence ID" value="ABX07555.1"/>
    <property type="status" value="ALT_INIT"/>
    <property type="molecule type" value="Genomic_DNA"/>
</dbReference>
<dbReference type="SMR" id="A9B422"/>
<dbReference type="FunCoup" id="A9B422">
    <property type="interactions" value="465"/>
</dbReference>
<dbReference type="STRING" id="316274.Haur_4925"/>
<dbReference type="KEGG" id="hau:Haur_4925"/>
<dbReference type="eggNOG" id="COG0198">
    <property type="taxonomic scope" value="Bacteria"/>
</dbReference>
<dbReference type="HOGENOM" id="CLU_093315_2_3_0"/>
<dbReference type="InParanoid" id="A9B422"/>
<dbReference type="Proteomes" id="UP000000787">
    <property type="component" value="Chromosome"/>
</dbReference>
<dbReference type="GO" id="GO:1990904">
    <property type="term" value="C:ribonucleoprotein complex"/>
    <property type="evidence" value="ECO:0007669"/>
    <property type="project" value="UniProtKB-KW"/>
</dbReference>
<dbReference type="GO" id="GO:0005840">
    <property type="term" value="C:ribosome"/>
    <property type="evidence" value="ECO:0007669"/>
    <property type="project" value="UniProtKB-KW"/>
</dbReference>
<dbReference type="GO" id="GO:0019843">
    <property type="term" value="F:rRNA binding"/>
    <property type="evidence" value="ECO:0007669"/>
    <property type="project" value="UniProtKB-UniRule"/>
</dbReference>
<dbReference type="GO" id="GO:0003735">
    <property type="term" value="F:structural constituent of ribosome"/>
    <property type="evidence" value="ECO:0007669"/>
    <property type="project" value="InterPro"/>
</dbReference>
<dbReference type="GO" id="GO:0006412">
    <property type="term" value="P:translation"/>
    <property type="evidence" value="ECO:0007669"/>
    <property type="project" value="UniProtKB-UniRule"/>
</dbReference>
<dbReference type="CDD" id="cd06089">
    <property type="entry name" value="KOW_RPL26"/>
    <property type="match status" value="1"/>
</dbReference>
<dbReference type="Gene3D" id="2.30.30.30">
    <property type="match status" value="1"/>
</dbReference>
<dbReference type="HAMAP" id="MF_01326_B">
    <property type="entry name" value="Ribosomal_uL24_B"/>
    <property type="match status" value="1"/>
</dbReference>
<dbReference type="InterPro" id="IPR005824">
    <property type="entry name" value="KOW"/>
</dbReference>
<dbReference type="InterPro" id="IPR014722">
    <property type="entry name" value="Rib_uL2_dom2"/>
</dbReference>
<dbReference type="InterPro" id="IPR003256">
    <property type="entry name" value="Ribosomal_uL24"/>
</dbReference>
<dbReference type="InterPro" id="IPR005825">
    <property type="entry name" value="Ribosomal_uL24_CS"/>
</dbReference>
<dbReference type="InterPro" id="IPR041988">
    <property type="entry name" value="Ribosomal_uL24_KOW"/>
</dbReference>
<dbReference type="InterPro" id="IPR008991">
    <property type="entry name" value="Translation_prot_SH3-like_sf"/>
</dbReference>
<dbReference type="NCBIfam" id="TIGR01079">
    <property type="entry name" value="rplX_bact"/>
    <property type="match status" value="1"/>
</dbReference>
<dbReference type="PANTHER" id="PTHR12903">
    <property type="entry name" value="MITOCHONDRIAL RIBOSOMAL PROTEIN L24"/>
    <property type="match status" value="1"/>
</dbReference>
<dbReference type="Pfam" id="PF00467">
    <property type="entry name" value="KOW"/>
    <property type="match status" value="1"/>
</dbReference>
<dbReference type="Pfam" id="PF17136">
    <property type="entry name" value="ribosomal_L24"/>
    <property type="match status" value="1"/>
</dbReference>
<dbReference type="SMART" id="SM00739">
    <property type="entry name" value="KOW"/>
    <property type="match status" value="1"/>
</dbReference>
<dbReference type="SUPFAM" id="SSF50104">
    <property type="entry name" value="Translation proteins SH3-like domain"/>
    <property type="match status" value="1"/>
</dbReference>
<dbReference type="PROSITE" id="PS01108">
    <property type="entry name" value="RIBOSOMAL_L24"/>
    <property type="match status" value="1"/>
</dbReference>
<name>RL24_HERA2</name>
<gene>
    <name evidence="1" type="primary">rplX</name>
    <name type="ordered locus">Haur_4925</name>
</gene>
<sequence length="102" mass="11172">MHVKKGDRVVVLSGREKGREGVIKLSLPKKERVVVENVNIVKKHVKPMGNRQGGILEVEAALHVSKVMLICPACGKPSRTGHRVNDEGKKVRVCKQCNADVA</sequence>
<organism>
    <name type="scientific">Herpetosiphon aurantiacus (strain ATCC 23779 / DSM 785 / 114-95)</name>
    <dbReference type="NCBI Taxonomy" id="316274"/>
    <lineage>
        <taxon>Bacteria</taxon>
        <taxon>Bacillati</taxon>
        <taxon>Chloroflexota</taxon>
        <taxon>Chloroflexia</taxon>
        <taxon>Herpetosiphonales</taxon>
        <taxon>Herpetosiphonaceae</taxon>
        <taxon>Herpetosiphon</taxon>
    </lineage>
</organism>